<organism>
    <name type="scientific">Salmonella paratyphi C (strain RKS4594)</name>
    <dbReference type="NCBI Taxonomy" id="476213"/>
    <lineage>
        <taxon>Bacteria</taxon>
        <taxon>Pseudomonadati</taxon>
        <taxon>Pseudomonadota</taxon>
        <taxon>Gammaproteobacteria</taxon>
        <taxon>Enterobacterales</taxon>
        <taxon>Enterobacteriaceae</taxon>
        <taxon>Salmonella</taxon>
    </lineage>
</organism>
<accession>C0PWX6</accession>
<dbReference type="EC" id="3.5.3.8" evidence="1"/>
<dbReference type="EMBL" id="CP000857">
    <property type="protein sequence ID" value="ACN44958.1"/>
    <property type="molecule type" value="Genomic_DNA"/>
</dbReference>
<dbReference type="RefSeq" id="WP_000195678.1">
    <property type="nucleotide sequence ID" value="NC_012125.1"/>
</dbReference>
<dbReference type="SMR" id="C0PWX6"/>
<dbReference type="KEGG" id="sei:SPC_0784"/>
<dbReference type="HOGENOM" id="CLU_039478_2_0_6"/>
<dbReference type="UniPathway" id="UPA00379">
    <property type="reaction ID" value="UER00552"/>
</dbReference>
<dbReference type="Proteomes" id="UP000001599">
    <property type="component" value="Chromosome"/>
</dbReference>
<dbReference type="GO" id="GO:0008783">
    <property type="term" value="F:agmatinase activity"/>
    <property type="evidence" value="ECO:0007669"/>
    <property type="project" value="TreeGrafter"/>
</dbReference>
<dbReference type="GO" id="GO:0050415">
    <property type="term" value="F:formimidoylglutamase activity"/>
    <property type="evidence" value="ECO:0007669"/>
    <property type="project" value="UniProtKB-UniRule"/>
</dbReference>
<dbReference type="GO" id="GO:0030145">
    <property type="term" value="F:manganese ion binding"/>
    <property type="evidence" value="ECO:0007669"/>
    <property type="project" value="UniProtKB-UniRule"/>
</dbReference>
<dbReference type="GO" id="GO:0019556">
    <property type="term" value="P:L-histidine catabolic process to glutamate and formamide"/>
    <property type="evidence" value="ECO:0007669"/>
    <property type="project" value="UniProtKB-UniPathway"/>
</dbReference>
<dbReference type="GO" id="GO:0019557">
    <property type="term" value="P:L-histidine catabolic process to glutamate and formate"/>
    <property type="evidence" value="ECO:0007669"/>
    <property type="project" value="UniProtKB-UniPathway"/>
</dbReference>
<dbReference type="GO" id="GO:0033389">
    <property type="term" value="P:putrescine biosynthetic process from arginine, via agmatine"/>
    <property type="evidence" value="ECO:0007669"/>
    <property type="project" value="TreeGrafter"/>
</dbReference>
<dbReference type="CDD" id="cd09988">
    <property type="entry name" value="Formimidoylglutamase"/>
    <property type="match status" value="1"/>
</dbReference>
<dbReference type="FunFam" id="3.40.800.10:FF:000010">
    <property type="entry name" value="Formimidoylglutamase"/>
    <property type="match status" value="1"/>
</dbReference>
<dbReference type="Gene3D" id="3.40.800.10">
    <property type="entry name" value="Ureohydrolase domain"/>
    <property type="match status" value="1"/>
</dbReference>
<dbReference type="HAMAP" id="MF_00737">
    <property type="entry name" value="Formimidoylglutam"/>
    <property type="match status" value="1"/>
</dbReference>
<dbReference type="InterPro" id="IPR005923">
    <property type="entry name" value="HutG"/>
</dbReference>
<dbReference type="InterPro" id="IPR006035">
    <property type="entry name" value="Ureohydrolase"/>
</dbReference>
<dbReference type="InterPro" id="IPR023696">
    <property type="entry name" value="Ureohydrolase_dom_sf"/>
</dbReference>
<dbReference type="NCBIfam" id="TIGR01227">
    <property type="entry name" value="hutG"/>
    <property type="match status" value="1"/>
</dbReference>
<dbReference type="PANTHER" id="PTHR11358">
    <property type="entry name" value="ARGINASE/AGMATINASE"/>
    <property type="match status" value="1"/>
</dbReference>
<dbReference type="PANTHER" id="PTHR11358:SF35">
    <property type="entry name" value="FORMIMIDOYLGLUTAMASE"/>
    <property type="match status" value="1"/>
</dbReference>
<dbReference type="Pfam" id="PF00491">
    <property type="entry name" value="Arginase"/>
    <property type="match status" value="1"/>
</dbReference>
<dbReference type="PIRSF" id="PIRSF036979">
    <property type="entry name" value="Arginase"/>
    <property type="match status" value="1"/>
</dbReference>
<dbReference type="SUPFAM" id="SSF52768">
    <property type="entry name" value="Arginase/deacetylase"/>
    <property type="match status" value="1"/>
</dbReference>
<dbReference type="PROSITE" id="PS51409">
    <property type="entry name" value="ARGINASE_2"/>
    <property type="match status" value="1"/>
</dbReference>
<reference key="1">
    <citation type="journal article" date="2009" name="PLoS ONE">
        <title>Salmonella paratyphi C: genetic divergence from Salmonella choleraesuis and pathogenic convergence with Salmonella typhi.</title>
        <authorList>
            <person name="Liu W.-Q."/>
            <person name="Feng Y."/>
            <person name="Wang Y."/>
            <person name="Zou Q.-H."/>
            <person name="Chen F."/>
            <person name="Guo J.-T."/>
            <person name="Peng Y.-H."/>
            <person name="Jin Y."/>
            <person name="Li Y.-G."/>
            <person name="Hu S.-N."/>
            <person name="Johnston R.N."/>
            <person name="Liu G.-R."/>
            <person name="Liu S.-L."/>
        </authorList>
    </citation>
    <scope>NUCLEOTIDE SEQUENCE [LARGE SCALE GENOMIC DNA]</scope>
    <source>
        <strain>RKS4594</strain>
    </source>
</reference>
<comment type="function">
    <text evidence="1">Catalyzes the conversion of N-formimidoyl-L-glutamate to L-glutamate and formamide.</text>
</comment>
<comment type="catalytic activity">
    <reaction evidence="1">
        <text>N-formimidoyl-L-glutamate + H2O = formamide + L-glutamate</text>
        <dbReference type="Rhea" id="RHEA:22492"/>
        <dbReference type="ChEBI" id="CHEBI:15377"/>
        <dbReference type="ChEBI" id="CHEBI:16397"/>
        <dbReference type="ChEBI" id="CHEBI:29985"/>
        <dbReference type="ChEBI" id="CHEBI:58928"/>
        <dbReference type="EC" id="3.5.3.8"/>
    </reaction>
</comment>
<comment type="cofactor">
    <cofactor evidence="1">
        <name>Mn(2+)</name>
        <dbReference type="ChEBI" id="CHEBI:29035"/>
    </cofactor>
    <text evidence="1">Binds 2 manganese ions per subunit.</text>
</comment>
<comment type="pathway">
    <text evidence="1">Amino-acid degradation; L-histidine degradation into L-glutamate; L-glutamate from N-formimidoyl-L-glutamate (hydrolase route): step 1/1.</text>
</comment>
<comment type="similarity">
    <text evidence="1">Belongs to the arginase family.</text>
</comment>
<protein>
    <recommendedName>
        <fullName evidence="1">Formimidoylglutamase</fullName>
        <ecNumber evidence="1">3.5.3.8</ecNumber>
    </recommendedName>
    <alternativeName>
        <fullName evidence="1">Formiminoglutamase</fullName>
    </alternativeName>
    <alternativeName>
        <fullName evidence="1">Formiminoglutamate hydrolase</fullName>
    </alternativeName>
</protein>
<gene>
    <name evidence="1" type="primary">hutG</name>
    <name type="ordered locus">SPC_0784</name>
</gene>
<sequence length="313" mass="34463">MTQWYPASPALWQGRDDSIEAPDARRLFQTVTRSETFFPENWQQKIALMGFACDEGVKRNSGRPGAAGAPDALRKALANMASHQGHERLVDLGNWVAPTPDLEGAQQALRDAVSRCLRAGMRTLVLGGGHETAFGHGAGVLDAFAQESVGIINLDAHLDLRQTDRATSGTPFRQLAQLCDAQSRAFHYACFGVSRAANTQALWREAQWRNVTVVEDLDCHDALAQMTQFIDKVDKIYLTIDLDVLPVWEMPAVSAPAALGVPLIQVLRLIEPVCRSGKLQAADLVEFNPRFDEDGAAARVAARLGWQIAHWWR</sequence>
<feature type="chain" id="PRO_1000148214" description="Formimidoylglutamase">
    <location>
        <begin position="1"/>
        <end position="313"/>
    </location>
</feature>
<feature type="binding site" evidence="1">
    <location>
        <position position="130"/>
    </location>
    <ligand>
        <name>Mn(2+)</name>
        <dbReference type="ChEBI" id="CHEBI:29035"/>
        <label>1</label>
    </ligand>
</feature>
<feature type="binding site" evidence="1">
    <location>
        <position position="155"/>
    </location>
    <ligand>
        <name>Mn(2+)</name>
        <dbReference type="ChEBI" id="CHEBI:29035"/>
        <label>1</label>
    </ligand>
</feature>
<feature type="binding site" evidence="1">
    <location>
        <position position="155"/>
    </location>
    <ligand>
        <name>Mn(2+)</name>
        <dbReference type="ChEBI" id="CHEBI:29035"/>
        <label>2</label>
    </ligand>
</feature>
<feature type="binding site" evidence="1">
    <location>
        <position position="157"/>
    </location>
    <ligand>
        <name>Mn(2+)</name>
        <dbReference type="ChEBI" id="CHEBI:29035"/>
        <label>2</label>
    </ligand>
</feature>
<feature type="binding site" evidence="1">
    <location>
        <position position="159"/>
    </location>
    <ligand>
        <name>Mn(2+)</name>
        <dbReference type="ChEBI" id="CHEBI:29035"/>
        <label>1</label>
    </ligand>
</feature>
<feature type="binding site" evidence="1">
    <location>
        <position position="241"/>
    </location>
    <ligand>
        <name>Mn(2+)</name>
        <dbReference type="ChEBI" id="CHEBI:29035"/>
        <label>1</label>
    </ligand>
</feature>
<feature type="binding site" evidence="1">
    <location>
        <position position="241"/>
    </location>
    <ligand>
        <name>Mn(2+)</name>
        <dbReference type="ChEBI" id="CHEBI:29035"/>
        <label>2</label>
    </ligand>
</feature>
<feature type="binding site" evidence="1">
    <location>
        <position position="243"/>
    </location>
    <ligand>
        <name>Mn(2+)</name>
        <dbReference type="ChEBI" id="CHEBI:29035"/>
        <label>2</label>
    </ligand>
</feature>
<name>HUTG_SALPC</name>
<evidence type="ECO:0000255" key="1">
    <source>
        <dbReference type="HAMAP-Rule" id="MF_00737"/>
    </source>
</evidence>
<keyword id="KW-0369">Histidine metabolism</keyword>
<keyword id="KW-0378">Hydrolase</keyword>
<keyword id="KW-0464">Manganese</keyword>
<keyword id="KW-0479">Metal-binding</keyword>
<proteinExistence type="inferred from homology"/>